<reference key="1">
    <citation type="journal article" date="2005" name="J. Gen. Virol.">
        <title>Complete coding sequences of the rabbitpox virus genome.</title>
        <authorList>
            <person name="Li G."/>
            <person name="Chen N."/>
            <person name="Roper R.L."/>
            <person name="Feng Z."/>
            <person name="Hunter A.L."/>
            <person name="Danila M."/>
            <person name="Lefkowitz E.J."/>
            <person name="Buller R.M.L."/>
            <person name="Upton C."/>
        </authorList>
    </citation>
    <scope>NUCLEOTIDE SEQUENCE [LARGE SCALE GENOMIC DNA]</scope>
</reference>
<evidence type="ECO:0000250" key="1"/>
<evidence type="ECO:0000305" key="2"/>
<name>SODL_RABPU</name>
<dbReference type="EMBL" id="AY484669">
    <property type="protein sequence ID" value="AAS49867.1"/>
    <property type="molecule type" value="Genomic_DNA"/>
</dbReference>
<dbReference type="SMR" id="Q6RZD7"/>
<dbReference type="Proteomes" id="UP000166173">
    <property type="component" value="Segment"/>
</dbReference>
<dbReference type="GO" id="GO:0030430">
    <property type="term" value="C:host cell cytoplasm"/>
    <property type="evidence" value="ECO:0007669"/>
    <property type="project" value="UniProtKB-SubCell"/>
</dbReference>
<dbReference type="GO" id="GO:0046872">
    <property type="term" value="F:metal ion binding"/>
    <property type="evidence" value="ECO:0007669"/>
    <property type="project" value="InterPro"/>
</dbReference>
<dbReference type="GO" id="GO:0006801">
    <property type="term" value="P:superoxide metabolic process"/>
    <property type="evidence" value="ECO:0007669"/>
    <property type="project" value="InterPro"/>
</dbReference>
<dbReference type="Gene3D" id="2.60.40.200">
    <property type="entry name" value="Superoxide dismutase, copper/zinc binding domain"/>
    <property type="match status" value="1"/>
</dbReference>
<dbReference type="InterPro" id="IPR036423">
    <property type="entry name" value="SOD-like_Cu/Zn_dom_sf"/>
</dbReference>
<dbReference type="SUPFAM" id="SSF49329">
    <property type="entry name" value="Cu,Zn superoxide dismutase-like"/>
    <property type="match status" value="1"/>
</dbReference>
<protein>
    <recommendedName>
        <fullName>Cu-Zn superoxide dismutase-like protein</fullName>
    </recommendedName>
</protein>
<organismHost>
    <name type="scientific">Oryctolagus cuniculus</name>
    <name type="common">Rabbit</name>
    <dbReference type="NCBI Taxonomy" id="9986"/>
</organismHost>
<proteinExistence type="inferred from homology"/>
<gene>
    <name type="ordered locus">RPXV154</name>
</gene>
<keyword id="KW-1035">Host cytoplasm</keyword>
<sequence length="125" mass="13663">MAVCIIDHDNIRGVIYFEPVHGKDKVLGSVIGLKSGTYSLIIHRYGDISQGCDSIGSPEIFIGNIFVNRYGVAYVYLDTDVNISTIIGKALSISKNDQRLACGVIGISYINEKIIHFLTINENGV</sequence>
<organism>
    <name type="scientific">Rabbitpox virus (strain Utrecht)</name>
    <name type="common">RPV</name>
    <dbReference type="NCBI Taxonomy" id="45417"/>
    <lineage>
        <taxon>Viruses</taxon>
        <taxon>Varidnaviria</taxon>
        <taxon>Bamfordvirae</taxon>
        <taxon>Nucleocytoviricota</taxon>
        <taxon>Pokkesviricetes</taxon>
        <taxon>Chitovirales</taxon>
        <taxon>Poxviridae</taxon>
        <taxon>Chordopoxvirinae</taxon>
        <taxon>Orthopoxvirus</taxon>
        <taxon>Vaccinia virus</taxon>
    </lineage>
</organism>
<feature type="chain" id="PRO_0000164177" description="Cu-Zn superoxide dismutase-like protein">
    <location>
        <begin position="1"/>
        <end position="125"/>
    </location>
</feature>
<accession>Q6RZD7</accession>
<comment type="function">
    <text evidence="1">Virion protein with no enzymatic activity.</text>
</comment>
<comment type="subcellular location">
    <subcellularLocation>
        <location evidence="1">Host cytoplasm</location>
    </subcellularLocation>
</comment>
<comment type="similarity">
    <text evidence="2">Belongs to the Cu-Zn superoxide dismutase family.</text>
</comment>